<feature type="chain" id="PRO_0000309011" description="Putative uncharacterized protein YBR103C-A">
    <location>
        <begin position="1"/>
        <end position="47"/>
    </location>
</feature>
<name>YB103_YEAST</name>
<accession>P0C5L3</accession>
<reference key="1">
    <citation type="journal article" date="1994" name="Yeast">
        <title>Analysis of a 70 kb region on the right arm of yeast chromosome II.</title>
        <authorList>
            <person name="Mannhaupt G."/>
            <person name="Stucka R."/>
            <person name="Ehnle S."/>
            <person name="Vetter I."/>
            <person name="Feldmann H."/>
        </authorList>
    </citation>
    <scope>NUCLEOTIDE SEQUENCE [GENOMIC DNA]</scope>
    <source>
        <strain>ATCC 204508 / S288c</strain>
    </source>
</reference>
<reference key="2">
    <citation type="journal article" date="1994" name="EMBO J.">
        <title>Complete DNA sequence of yeast chromosome II.</title>
        <authorList>
            <person name="Feldmann H."/>
            <person name="Aigle M."/>
            <person name="Aljinovic G."/>
            <person name="Andre B."/>
            <person name="Baclet M.C."/>
            <person name="Barthe C."/>
            <person name="Baur A."/>
            <person name="Becam A.-M."/>
            <person name="Biteau N."/>
            <person name="Boles E."/>
            <person name="Brandt T."/>
            <person name="Brendel M."/>
            <person name="Brueckner M."/>
            <person name="Bussereau F."/>
            <person name="Christiansen C."/>
            <person name="Contreras R."/>
            <person name="Crouzet M."/>
            <person name="Cziepluch C."/>
            <person name="Demolis N."/>
            <person name="Delaveau T."/>
            <person name="Doignon F."/>
            <person name="Domdey H."/>
            <person name="Duesterhus S."/>
            <person name="Dubois E."/>
            <person name="Dujon B."/>
            <person name="El Bakkoury M."/>
            <person name="Entian K.-D."/>
            <person name="Feuermann M."/>
            <person name="Fiers W."/>
            <person name="Fobo G.M."/>
            <person name="Fritz C."/>
            <person name="Gassenhuber J."/>
            <person name="Glansdorff N."/>
            <person name="Goffeau A."/>
            <person name="Grivell L.A."/>
            <person name="de Haan M."/>
            <person name="Hein C."/>
            <person name="Herbert C.J."/>
            <person name="Hollenberg C.P."/>
            <person name="Holmstroem K."/>
            <person name="Jacq C."/>
            <person name="Jacquet M."/>
            <person name="Jauniaux J.-C."/>
            <person name="Jonniaux J.-L."/>
            <person name="Kallesoee T."/>
            <person name="Kiesau P."/>
            <person name="Kirchrath L."/>
            <person name="Koetter P."/>
            <person name="Korol S."/>
            <person name="Liebl S."/>
            <person name="Logghe M."/>
            <person name="Lohan A.J.E."/>
            <person name="Louis E.J."/>
            <person name="Li Z.Y."/>
            <person name="Maat M.J."/>
            <person name="Mallet L."/>
            <person name="Mannhaupt G."/>
            <person name="Messenguy F."/>
            <person name="Miosga T."/>
            <person name="Molemans F."/>
            <person name="Mueller S."/>
            <person name="Nasr F."/>
            <person name="Obermaier B."/>
            <person name="Perea J."/>
            <person name="Pierard A."/>
            <person name="Piravandi E."/>
            <person name="Pohl F.M."/>
            <person name="Pohl T.M."/>
            <person name="Potier S."/>
            <person name="Proft M."/>
            <person name="Purnelle B."/>
            <person name="Ramezani Rad M."/>
            <person name="Rieger M."/>
            <person name="Rose M."/>
            <person name="Schaaff-Gerstenschlaeger I."/>
            <person name="Scherens B."/>
            <person name="Schwarzlose C."/>
            <person name="Skala J."/>
            <person name="Slonimski P.P."/>
            <person name="Smits P.H.M."/>
            <person name="Souciet J.-L."/>
            <person name="Steensma H.Y."/>
            <person name="Stucka R."/>
            <person name="Urrestarazu L.A."/>
            <person name="van der Aart Q.J.M."/>
            <person name="Van Dyck L."/>
            <person name="Vassarotti A."/>
            <person name="Vetter I."/>
            <person name="Vierendeels F."/>
            <person name="Vissers S."/>
            <person name="Wagner G."/>
            <person name="de Wergifosse P."/>
            <person name="Wolfe K.H."/>
            <person name="Zagulski M."/>
            <person name="Zimmermann F.K."/>
            <person name="Mewes H.-W."/>
            <person name="Kleine K."/>
        </authorList>
    </citation>
    <scope>NUCLEOTIDE SEQUENCE [LARGE SCALE GENOMIC DNA]</scope>
    <source>
        <strain>ATCC 204508 / S288c</strain>
    </source>
</reference>
<reference key="3">
    <citation type="journal article" date="2014" name="G3 (Bethesda)">
        <title>The reference genome sequence of Saccharomyces cerevisiae: Then and now.</title>
        <authorList>
            <person name="Engel S.R."/>
            <person name="Dietrich F.S."/>
            <person name="Fisk D.G."/>
            <person name="Binkley G."/>
            <person name="Balakrishnan R."/>
            <person name="Costanzo M.C."/>
            <person name="Dwight S.S."/>
            <person name="Hitz B.C."/>
            <person name="Karra K."/>
            <person name="Nash R.S."/>
            <person name="Weng S."/>
            <person name="Wong E.D."/>
            <person name="Lloyd P."/>
            <person name="Skrzypek M.S."/>
            <person name="Miyasato S.R."/>
            <person name="Simison M."/>
            <person name="Cherry J.M."/>
        </authorList>
    </citation>
    <scope>GENOME REANNOTATION</scope>
    <source>
        <strain>ATCC 204508 / S288c</strain>
    </source>
</reference>
<reference key="4">
    <citation type="journal article" date="2000" name="FEBS Lett.">
        <title>Genomic exploration of the hemiascomycetous yeasts: 4. The genome of Saccharomyces cerevisiae revisited.</title>
        <authorList>
            <person name="Blandin G."/>
            <person name="Durrens P."/>
            <person name="Tekaia F."/>
            <person name="Aigle M."/>
            <person name="Bolotin-Fukuhara M."/>
            <person name="Bon E."/>
            <person name="Casaregola S."/>
            <person name="de Montigny J."/>
            <person name="Gaillardin C."/>
            <person name="Lepingle A."/>
            <person name="Llorente B."/>
            <person name="Malpertuy A."/>
            <person name="Neuveglise C."/>
            <person name="Ozier-Kalogeropoulos O."/>
            <person name="Perrin A."/>
            <person name="Potier S."/>
            <person name="Souciet J.-L."/>
            <person name="Talla E."/>
            <person name="Toffano-Nioche C."/>
            <person name="Wesolowski-Louvel M."/>
            <person name="Marck C."/>
            <person name="Dujon B."/>
        </authorList>
    </citation>
    <scope>GENOME REANNOTATION</scope>
</reference>
<evidence type="ECO:0000305" key="1">
    <source>
    </source>
</evidence>
<gene>
    <name type="ordered locus">YBR103C-A</name>
</gene>
<sequence>MTLRDSCTTSLKGGPRRFPLRNFSLFTFCKQRNNNKNDKIHLFMYCT</sequence>
<protein>
    <recommendedName>
        <fullName>Putative uncharacterized protein YBR103C-A</fullName>
    </recommendedName>
</protein>
<dbReference type="EMBL" id="X78993">
    <property type="status" value="NOT_ANNOTATED_CDS"/>
    <property type="molecule type" value="Genomic_DNA"/>
</dbReference>
<dbReference type="EMBL" id="Z35972">
    <property type="status" value="NOT_ANNOTATED_CDS"/>
    <property type="molecule type" value="Genomic_DNA"/>
</dbReference>
<dbReference type="EMBL" id="Z35973">
    <property type="status" value="NOT_ANNOTATED_CDS"/>
    <property type="molecule type" value="Genomic_DNA"/>
</dbReference>
<dbReference type="STRING" id="4932.YBR103C-A"/>
<dbReference type="PaxDb" id="4932-YBR103C-A"/>
<dbReference type="EnsemblFungi" id="YBR103C-A_mRNA">
    <property type="protein sequence ID" value="YBR103C-A"/>
    <property type="gene ID" value="YBR103C-A"/>
</dbReference>
<dbReference type="AGR" id="SGD:S000007593"/>
<dbReference type="SGD" id="S000007593">
    <property type="gene designation" value="YBR103C-A"/>
</dbReference>
<dbReference type="HOGENOM" id="CLU_3175644_0_0_1"/>
<comment type="caution">
    <text evidence="1">Product of a dubious gene prediction unlikely to encode a functional protein. Because of that it is not part of the S.cerevisiae S288c complete/reference proteome set.</text>
</comment>
<proteinExistence type="uncertain"/>
<organism>
    <name type="scientific">Saccharomyces cerevisiae (strain ATCC 204508 / S288c)</name>
    <name type="common">Baker's yeast</name>
    <dbReference type="NCBI Taxonomy" id="559292"/>
    <lineage>
        <taxon>Eukaryota</taxon>
        <taxon>Fungi</taxon>
        <taxon>Dikarya</taxon>
        <taxon>Ascomycota</taxon>
        <taxon>Saccharomycotina</taxon>
        <taxon>Saccharomycetes</taxon>
        <taxon>Saccharomycetales</taxon>
        <taxon>Saccharomycetaceae</taxon>
        <taxon>Saccharomyces</taxon>
    </lineage>
</organism>